<evidence type="ECO:0000255" key="1">
    <source>
        <dbReference type="HAMAP-Rule" id="MF_00107"/>
    </source>
</evidence>
<feature type="chain" id="PRO_1000022855" description="2-C-methyl-D-erythritol 2,4-cyclodiphosphate synthase">
    <location>
        <begin position="1"/>
        <end position="162"/>
    </location>
</feature>
<feature type="binding site" evidence="1">
    <location>
        <begin position="12"/>
        <end position="14"/>
    </location>
    <ligand>
        <name>4-CDP-2-C-methyl-D-erythritol 2-phosphate</name>
        <dbReference type="ChEBI" id="CHEBI:57919"/>
    </ligand>
</feature>
<feature type="binding site" evidence="1">
    <location>
        <position position="12"/>
    </location>
    <ligand>
        <name>a divalent metal cation</name>
        <dbReference type="ChEBI" id="CHEBI:60240"/>
    </ligand>
</feature>
<feature type="binding site" evidence="1">
    <location>
        <position position="14"/>
    </location>
    <ligand>
        <name>a divalent metal cation</name>
        <dbReference type="ChEBI" id="CHEBI:60240"/>
    </ligand>
</feature>
<feature type="binding site" evidence="1">
    <location>
        <begin position="38"/>
        <end position="39"/>
    </location>
    <ligand>
        <name>4-CDP-2-C-methyl-D-erythritol 2-phosphate</name>
        <dbReference type="ChEBI" id="CHEBI:57919"/>
    </ligand>
</feature>
<feature type="binding site" evidence="1">
    <location>
        <position position="46"/>
    </location>
    <ligand>
        <name>a divalent metal cation</name>
        <dbReference type="ChEBI" id="CHEBI:60240"/>
    </ligand>
</feature>
<feature type="binding site" evidence="1">
    <location>
        <begin position="60"/>
        <end position="62"/>
    </location>
    <ligand>
        <name>4-CDP-2-C-methyl-D-erythritol 2-phosphate</name>
        <dbReference type="ChEBI" id="CHEBI:57919"/>
    </ligand>
</feature>
<feature type="binding site" evidence="1">
    <location>
        <begin position="133"/>
        <end position="136"/>
    </location>
    <ligand>
        <name>4-CDP-2-C-methyl-D-erythritol 2-phosphate</name>
        <dbReference type="ChEBI" id="CHEBI:57919"/>
    </ligand>
</feature>
<feature type="binding site" evidence="1">
    <location>
        <position position="143"/>
    </location>
    <ligand>
        <name>4-CDP-2-C-methyl-D-erythritol 2-phosphate</name>
        <dbReference type="ChEBI" id="CHEBI:57919"/>
    </ligand>
</feature>
<feature type="site" description="Transition state stabilizer" evidence="1">
    <location>
        <position position="38"/>
    </location>
</feature>
<feature type="site" description="Transition state stabilizer" evidence="1">
    <location>
        <position position="134"/>
    </location>
</feature>
<keyword id="KW-0414">Isoprene biosynthesis</keyword>
<keyword id="KW-0456">Lyase</keyword>
<keyword id="KW-0479">Metal-binding</keyword>
<name>ISPF_MYCVP</name>
<gene>
    <name evidence="1" type="primary">ispF</name>
    <name type="ordered locus">Mvan_5339</name>
</gene>
<comment type="function">
    <text evidence="1">Involved in the biosynthesis of isopentenyl diphosphate (IPP) and dimethylallyl diphosphate (DMAPP), two major building blocks of isoprenoid compounds. Catalyzes the conversion of 4-diphosphocytidyl-2-C-methyl-D-erythritol 2-phosphate (CDP-ME2P) to 2-C-methyl-D-erythritol 2,4-cyclodiphosphate (ME-CPP) with a corresponding release of cytidine 5-monophosphate (CMP).</text>
</comment>
<comment type="catalytic activity">
    <reaction evidence="1">
        <text>4-CDP-2-C-methyl-D-erythritol 2-phosphate = 2-C-methyl-D-erythritol 2,4-cyclic diphosphate + CMP</text>
        <dbReference type="Rhea" id="RHEA:23864"/>
        <dbReference type="ChEBI" id="CHEBI:57919"/>
        <dbReference type="ChEBI" id="CHEBI:58483"/>
        <dbReference type="ChEBI" id="CHEBI:60377"/>
        <dbReference type="EC" id="4.6.1.12"/>
    </reaction>
</comment>
<comment type="cofactor">
    <cofactor evidence="1">
        <name>a divalent metal cation</name>
        <dbReference type="ChEBI" id="CHEBI:60240"/>
    </cofactor>
    <text evidence="1">Binds 1 divalent metal cation per subunit.</text>
</comment>
<comment type="pathway">
    <text evidence="1">Isoprenoid biosynthesis; isopentenyl diphosphate biosynthesis via DXP pathway; isopentenyl diphosphate from 1-deoxy-D-xylulose 5-phosphate: step 4/6.</text>
</comment>
<comment type="subunit">
    <text evidence="1">Homotrimer.</text>
</comment>
<comment type="similarity">
    <text evidence="1">Belongs to the IspF family.</text>
</comment>
<proteinExistence type="inferred from homology"/>
<reference key="1">
    <citation type="submission" date="2006-12" db="EMBL/GenBank/DDBJ databases">
        <title>Complete sequence of Mycobacterium vanbaalenii PYR-1.</title>
        <authorList>
            <consortium name="US DOE Joint Genome Institute"/>
            <person name="Copeland A."/>
            <person name="Lucas S."/>
            <person name="Lapidus A."/>
            <person name="Barry K."/>
            <person name="Detter J.C."/>
            <person name="Glavina del Rio T."/>
            <person name="Hammon N."/>
            <person name="Israni S."/>
            <person name="Dalin E."/>
            <person name="Tice H."/>
            <person name="Pitluck S."/>
            <person name="Singan V."/>
            <person name="Schmutz J."/>
            <person name="Larimer F."/>
            <person name="Land M."/>
            <person name="Hauser L."/>
            <person name="Kyrpides N."/>
            <person name="Anderson I.J."/>
            <person name="Miller C."/>
            <person name="Richardson P."/>
        </authorList>
    </citation>
    <scope>NUCLEOTIDE SEQUENCE [LARGE SCALE GENOMIC DNA]</scope>
    <source>
        <strain>DSM 7251 / JCM 13017 / BCRC 16820 / KCTC 9966 / NRRL B-24157 / PYR-1</strain>
    </source>
</reference>
<protein>
    <recommendedName>
        <fullName evidence="1">2-C-methyl-D-erythritol 2,4-cyclodiphosphate synthase</fullName>
        <shortName evidence="1">MECDP-synthase</shortName>
        <shortName evidence="1">MECPP-synthase</shortName>
        <shortName evidence="1">MECPS</shortName>
        <ecNumber evidence="1">4.6.1.12</ecNumber>
    </recommendedName>
</protein>
<accession>A1TG10</accession>
<organism>
    <name type="scientific">Mycolicibacterium vanbaalenii (strain DSM 7251 / JCM 13017 / BCRC 16820 / KCTC 9966 / NRRL B-24157 / PYR-1)</name>
    <name type="common">Mycobacterium vanbaalenii</name>
    <dbReference type="NCBI Taxonomy" id="350058"/>
    <lineage>
        <taxon>Bacteria</taxon>
        <taxon>Bacillati</taxon>
        <taxon>Actinomycetota</taxon>
        <taxon>Actinomycetes</taxon>
        <taxon>Mycobacteriales</taxon>
        <taxon>Mycobacteriaceae</taxon>
        <taxon>Mycolicibacterium</taxon>
    </lineage>
</organism>
<sequence>MLPSIRVGLGTDVHPIEAGRPCWLLCLLFDDADGCAGHSDGDVAAHALCDALLSAAGMGDIGEVFGTGLPQWRGVSGADMLRHVHSMMTAEGLRVGNAAVQVIGNRPKIGPRRAEAQRVLSGILGAPVSVSATTTDGLGLTGRGEGLAAIATALVVGDEGKG</sequence>
<dbReference type="EC" id="4.6.1.12" evidence="1"/>
<dbReference type="EMBL" id="CP000511">
    <property type="protein sequence ID" value="ABM16110.1"/>
    <property type="molecule type" value="Genomic_DNA"/>
</dbReference>
<dbReference type="RefSeq" id="WP_011782480.1">
    <property type="nucleotide sequence ID" value="NZ_JACKSD010000281.1"/>
</dbReference>
<dbReference type="SMR" id="A1TG10"/>
<dbReference type="STRING" id="350058.Mvan_5339"/>
<dbReference type="KEGG" id="mva:Mvan_5339"/>
<dbReference type="eggNOG" id="COG0245">
    <property type="taxonomic scope" value="Bacteria"/>
</dbReference>
<dbReference type="HOGENOM" id="CLU_084630_1_0_11"/>
<dbReference type="UniPathway" id="UPA00056">
    <property type="reaction ID" value="UER00095"/>
</dbReference>
<dbReference type="Proteomes" id="UP000009159">
    <property type="component" value="Chromosome"/>
</dbReference>
<dbReference type="GO" id="GO:0008685">
    <property type="term" value="F:2-C-methyl-D-erythritol 2,4-cyclodiphosphate synthase activity"/>
    <property type="evidence" value="ECO:0007669"/>
    <property type="project" value="UniProtKB-UniRule"/>
</dbReference>
<dbReference type="GO" id="GO:0046872">
    <property type="term" value="F:metal ion binding"/>
    <property type="evidence" value="ECO:0007669"/>
    <property type="project" value="UniProtKB-KW"/>
</dbReference>
<dbReference type="GO" id="GO:0019288">
    <property type="term" value="P:isopentenyl diphosphate biosynthetic process, methylerythritol 4-phosphate pathway"/>
    <property type="evidence" value="ECO:0007669"/>
    <property type="project" value="UniProtKB-UniRule"/>
</dbReference>
<dbReference type="GO" id="GO:0016114">
    <property type="term" value="P:terpenoid biosynthetic process"/>
    <property type="evidence" value="ECO:0007669"/>
    <property type="project" value="InterPro"/>
</dbReference>
<dbReference type="CDD" id="cd00554">
    <property type="entry name" value="MECDP_synthase"/>
    <property type="match status" value="1"/>
</dbReference>
<dbReference type="FunFam" id="3.30.1330.50:FF:000003">
    <property type="entry name" value="2-C-methyl-D-erythritol 2,4-cyclodiphosphate synthase"/>
    <property type="match status" value="1"/>
</dbReference>
<dbReference type="Gene3D" id="3.30.1330.50">
    <property type="entry name" value="2-C-methyl-D-erythritol 2,4-cyclodiphosphate synthase"/>
    <property type="match status" value="1"/>
</dbReference>
<dbReference type="HAMAP" id="MF_00107">
    <property type="entry name" value="IspF"/>
    <property type="match status" value="1"/>
</dbReference>
<dbReference type="InterPro" id="IPR003526">
    <property type="entry name" value="MECDP_synthase"/>
</dbReference>
<dbReference type="InterPro" id="IPR020555">
    <property type="entry name" value="MECDP_synthase_CS"/>
</dbReference>
<dbReference type="InterPro" id="IPR036571">
    <property type="entry name" value="MECDP_synthase_sf"/>
</dbReference>
<dbReference type="NCBIfam" id="TIGR00151">
    <property type="entry name" value="ispF"/>
    <property type="match status" value="1"/>
</dbReference>
<dbReference type="PANTHER" id="PTHR43181">
    <property type="entry name" value="2-C-METHYL-D-ERYTHRITOL 2,4-CYCLODIPHOSPHATE SYNTHASE, CHLOROPLASTIC"/>
    <property type="match status" value="1"/>
</dbReference>
<dbReference type="PANTHER" id="PTHR43181:SF1">
    <property type="entry name" value="2-C-METHYL-D-ERYTHRITOL 2,4-CYCLODIPHOSPHATE SYNTHASE, CHLOROPLASTIC"/>
    <property type="match status" value="1"/>
</dbReference>
<dbReference type="Pfam" id="PF02542">
    <property type="entry name" value="YgbB"/>
    <property type="match status" value="1"/>
</dbReference>
<dbReference type="SUPFAM" id="SSF69765">
    <property type="entry name" value="IpsF-like"/>
    <property type="match status" value="1"/>
</dbReference>
<dbReference type="PROSITE" id="PS01350">
    <property type="entry name" value="ISPF"/>
    <property type="match status" value="1"/>
</dbReference>